<feature type="chain" id="PRO_0000097718" description="Putative L-ribulose-5-phosphate 3-epimerase SgbU">
    <location>
        <begin position="1"/>
        <end position="286"/>
    </location>
</feature>
<dbReference type="EC" id="5.1.3.22"/>
<dbReference type="EMBL" id="U00039">
    <property type="protein sequence ID" value="AAB18559.1"/>
    <property type="status" value="ALT_INIT"/>
    <property type="molecule type" value="Genomic_DNA"/>
</dbReference>
<dbReference type="EMBL" id="U00096">
    <property type="protein sequence ID" value="AAC76606.2"/>
    <property type="molecule type" value="Genomic_DNA"/>
</dbReference>
<dbReference type="EMBL" id="AP009048">
    <property type="protein sequence ID" value="BAE77711.1"/>
    <property type="molecule type" value="Genomic_DNA"/>
</dbReference>
<dbReference type="PIR" id="S47803">
    <property type="entry name" value="S47803"/>
</dbReference>
<dbReference type="RefSeq" id="NP_418039.2">
    <property type="nucleotide sequence ID" value="NC_000913.3"/>
</dbReference>
<dbReference type="RefSeq" id="WP_001350555.1">
    <property type="nucleotide sequence ID" value="NZ_LN832404.1"/>
</dbReference>
<dbReference type="SMR" id="P37679"/>
<dbReference type="BioGRID" id="4259345">
    <property type="interactions" value="5"/>
</dbReference>
<dbReference type="FunCoup" id="P37679">
    <property type="interactions" value="115"/>
</dbReference>
<dbReference type="STRING" id="511145.b3582"/>
<dbReference type="PaxDb" id="511145-b3582"/>
<dbReference type="EnsemblBacteria" id="AAC76606">
    <property type="protein sequence ID" value="AAC76606"/>
    <property type="gene ID" value="b3582"/>
</dbReference>
<dbReference type="GeneID" id="948100"/>
<dbReference type="KEGG" id="ecj:JW5650"/>
<dbReference type="KEGG" id="eco:b3582"/>
<dbReference type="KEGG" id="ecoc:C3026_19420"/>
<dbReference type="PATRIC" id="fig|511145.12.peg.3697"/>
<dbReference type="EchoBASE" id="EB2194"/>
<dbReference type="eggNOG" id="COG3623">
    <property type="taxonomic scope" value="Bacteria"/>
</dbReference>
<dbReference type="HOGENOM" id="CLU_082738_0_0_6"/>
<dbReference type="InParanoid" id="P37679"/>
<dbReference type="OMA" id="VTIPSMC"/>
<dbReference type="OrthoDB" id="3185623at2"/>
<dbReference type="PhylomeDB" id="P37679"/>
<dbReference type="BioCyc" id="EcoCyc:EG12286-MONOMER"/>
<dbReference type="PRO" id="PR:P37679"/>
<dbReference type="Proteomes" id="UP000000625">
    <property type="component" value="Chromosome"/>
</dbReference>
<dbReference type="GO" id="GO:0003677">
    <property type="term" value="F:DNA binding"/>
    <property type="evidence" value="ECO:0007669"/>
    <property type="project" value="InterPro"/>
</dbReference>
<dbReference type="GO" id="GO:0016861">
    <property type="term" value="F:intramolecular oxidoreductase activity, interconverting aldoses and ketoses"/>
    <property type="evidence" value="ECO:0007669"/>
    <property type="project" value="InterPro"/>
</dbReference>
<dbReference type="GO" id="GO:0034015">
    <property type="term" value="F:L-ribulose-5-phosphate 3-epimerase activity"/>
    <property type="evidence" value="ECO:0000250"/>
    <property type="project" value="EcoCyc"/>
</dbReference>
<dbReference type="GO" id="GO:0008270">
    <property type="term" value="F:zinc ion binding"/>
    <property type="evidence" value="ECO:0007669"/>
    <property type="project" value="InterPro"/>
</dbReference>
<dbReference type="GO" id="GO:0006281">
    <property type="term" value="P:DNA repair"/>
    <property type="evidence" value="ECO:0007669"/>
    <property type="project" value="InterPro"/>
</dbReference>
<dbReference type="GO" id="GO:0019852">
    <property type="term" value="P:L-ascorbic acid metabolic process"/>
    <property type="evidence" value="ECO:0000318"/>
    <property type="project" value="GO_Central"/>
</dbReference>
<dbReference type="GO" id="GO:0019324">
    <property type="term" value="P:L-lyxose metabolic process"/>
    <property type="evidence" value="ECO:0000315"/>
    <property type="project" value="EcoCyc"/>
</dbReference>
<dbReference type="CDD" id="cd00019">
    <property type="entry name" value="AP2Ec"/>
    <property type="match status" value="1"/>
</dbReference>
<dbReference type="FunFam" id="3.20.20.150:FF:000003">
    <property type="entry name" value="L-ribulose-5-phosphate 3-epimerase UlaE"/>
    <property type="match status" value="1"/>
</dbReference>
<dbReference type="Gene3D" id="3.20.20.150">
    <property type="entry name" value="Divalent-metal-dependent TIM barrel enzymes"/>
    <property type="match status" value="1"/>
</dbReference>
<dbReference type="InterPro" id="IPR001719">
    <property type="entry name" value="AP_endonuc_2"/>
</dbReference>
<dbReference type="InterPro" id="IPR004560">
    <property type="entry name" value="L-Ru-5P_3-Epase"/>
</dbReference>
<dbReference type="InterPro" id="IPR050417">
    <property type="entry name" value="Sugar_Epim/Isomerase"/>
</dbReference>
<dbReference type="InterPro" id="IPR036237">
    <property type="entry name" value="Xyl_isomerase-like_sf"/>
</dbReference>
<dbReference type="InterPro" id="IPR013022">
    <property type="entry name" value="Xyl_isomerase-like_TIM-brl"/>
</dbReference>
<dbReference type="NCBIfam" id="TIGR00542">
    <property type="entry name" value="hxl6Piso_put"/>
    <property type="match status" value="1"/>
</dbReference>
<dbReference type="NCBIfam" id="NF009688">
    <property type="entry name" value="PRK13209.1"/>
    <property type="match status" value="1"/>
</dbReference>
<dbReference type="NCBIfam" id="NF009689">
    <property type="entry name" value="PRK13210.1"/>
    <property type="match status" value="1"/>
</dbReference>
<dbReference type="PANTHER" id="PTHR43489">
    <property type="entry name" value="ISOMERASE"/>
    <property type="match status" value="1"/>
</dbReference>
<dbReference type="PANTHER" id="PTHR43489:SF1">
    <property type="entry name" value="L-RIBULOSE-5-PHOSPHATE 3-EPIMERASE SGBU-RELATED"/>
    <property type="match status" value="1"/>
</dbReference>
<dbReference type="Pfam" id="PF01261">
    <property type="entry name" value="AP_endonuc_2"/>
    <property type="match status" value="1"/>
</dbReference>
<dbReference type="SUPFAM" id="SSF51658">
    <property type="entry name" value="Xylose isomerase-like"/>
    <property type="match status" value="1"/>
</dbReference>
<name>SGBU_ECOLI</name>
<evidence type="ECO:0000305" key="1"/>
<reference key="1">
    <citation type="journal article" date="1994" name="Nucleic Acids Res.">
        <title>Analysis of the Escherichia coli genome. V. DNA sequence of the region from 76.0 to 81.5 minutes.</title>
        <authorList>
            <person name="Sofia H.J."/>
            <person name="Burland V."/>
            <person name="Daniels D.L."/>
            <person name="Plunkett G. III"/>
            <person name="Blattner F.R."/>
        </authorList>
    </citation>
    <scope>NUCLEOTIDE SEQUENCE [LARGE SCALE GENOMIC DNA]</scope>
    <source>
        <strain>K12 / MG1655 / ATCC 47076</strain>
    </source>
</reference>
<reference key="2">
    <citation type="journal article" date="1997" name="Science">
        <title>The complete genome sequence of Escherichia coli K-12.</title>
        <authorList>
            <person name="Blattner F.R."/>
            <person name="Plunkett G. III"/>
            <person name="Bloch C.A."/>
            <person name="Perna N.T."/>
            <person name="Burland V."/>
            <person name="Riley M."/>
            <person name="Collado-Vides J."/>
            <person name="Glasner J.D."/>
            <person name="Rode C.K."/>
            <person name="Mayhew G.F."/>
            <person name="Gregor J."/>
            <person name="Davis N.W."/>
            <person name="Kirkpatrick H.A."/>
            <person name="Goeden M.A."/>
            <person name="Rose D.J."/>
            <person name="Mau B."/>
            <person name="Shao Y."/>
        </authorList>
    </citation>
    <scope>NUCLEOTIDE SEQUENCE [LARGE SCALE GENOMIC DNA]</scope>
    <source>
        <strain>K12 / MG1655 / ATCC 47076</strain>
    </source>
</reference>
<reference key="3">
    <citation type="journal article" date="2006" name="Mol. Syst. Biol.">
        <title>Highly accurate genome sequences of Escherichia coli K-12 strains MG1655 and W3110.</title>
        <authorList>
            <person name="Hayashi K."/>
            <person name="Morooka N."/>
            <person name="Yamamoto Y."/>
            <person name="Fujita K."/>
            <person name="Isono K."/>
            <person name="Choi S."/>
            <person name="Ohtsubo E."/>
            <person name="Baba T."/>
            <person name="Wanner B.L."/>
            <person name="Mori H."/>
            <person name="Horiuchi T."/>
        </authorList>
    </citation>
    <scope>NUCLEOTIDE SEQUENCE [LARGE SCALE GENOMIC DNA]</scope>
    <source>
        <strain>K12 / W3110 / ATCC 27325 / DSM 5911</strain>
    </source>
</reference>
<reference key="4">
    <citation type="journal article" date="1996" name="Genome Sci. Technol.">
        <title>Novel phosphotransferases system genes revealed by bacterial genome analysis: operons encoding homologues of sugar-specific permease domains of the phosphotransferase system and pentose catabolic enzymes.</title>
        <authorList>
            <person name="Reizer J."/>
            <person name="Charbit A."/>
            <person name="Reizer A."/>
            <person name="Saier M.H. Jr."/>
        </authorList>
    </citation>
    <scope>DISCUSSION OF SEQUENCE</scope>
</reference>
<reference key="5">
    <citation type="journal article" date="2000" name="J. Bacteriol.">
        <title>Role of the yiaR and yiaS genes of Escherichia coli in metabolism of endogenously formed L-xylulose.</title>
        <authorList>
            <person name="Ibanez E."/>
            <person name="Gimenez R."/>
            <person name="Pedraza T."/>
            <person name="Baldoma L."/>
            <person name="Aguilar J."/>
            <person name="Badia J."/>
        </authorList>
    </citation>
    <scope>PUTATIVE FUNCTION</scope>
</reference>
<sequence length="286" mass="32455">MRNHQLGIYEKALAKDLSWPERLVLAKSCGFDFVEMSVDETDERLSRLDWSAAQRTSLVAAMIETGVGIPSMCLSAHRRFPFGSRDEAVRERAREIMSKAIRLARDLGIRTIQLAGYDVYYEDHDEGTRQRFAEGLAWAVEQAAASQVMLAVEIMDTAFMNSISKWKKWDEMLASPWFTVYPDVGNLSAWGNDVPAELKLGIDRIAAIHLKDTQPVTGQSPGQFRDVPFGEGCVDFVGIFKTLHKLNYRGSFLIEMWTEKAKEPVLEIIQARRWIEARMQEAGFIC</sequence>
<keyword id="KW-0119">Carbohydrate metabolism</keyword>
<keyword id="KW-0413">Isomerase</keyword>
<keyword id="KW-1185">Reference proteome</keyword>
<gene>
    <name type="primary">sgbU</name>
    <name type="synonym">yiaR</name>
    <name type="ordered locus">b3582</name>
    <name type="ordered locus">JW5650</name>
</gene>
<proteinExistence type="inferred from homology"/>
<comment type="function">
    <text evidence="1">Catalyzes the isomerization of L-xylulose-5-phosphate to L-ribulose-5-phosphate (Potential). May be involved in the utilization of 2,3-diketo-L-gulonate.</text>
</comment>
<comment type="catalytic activity">
    <reaction>
        <text>L-ribulose 5-phosphate = L-xylulose 5-phosphate</text>
        <dbReference type="Rhea" id="RHEA:18497"/>
        <dbReference type="ChEBI" id="CHEBI:57829"/>
        <dbReference type="ChEBI" id="CHEBI:58226"/>
        <dbReference type="EC" id="5.1.3.22"/>
    </reaction>
</comment>
<comment type="similarity">
    <text evidence="1">Belongs to the L-ribulose-5-phosphate 3-epimerase family.</text>
</comment>
<comment type="sequence caution" evidence="1">
    <conflict type="erroneous initiation">
        <sequence resource="EMBL-CDS" id="AAB18559"/>
    </conflict>
    <text>Extended N-terminus.</text>
</comment>
<accession>P37679</accession>
<accession>Q2M7P5</accession>
<organism>
    <name type="scientific">Escherichia coli (strain K12)</name>
    <dbReference type="NCBI Taxonomy" id="83333"/>
    <lineage>
        <taxon>Bacteria</taxon>
        <taxon>Pseudomonadati</taxon>
        <taxon>Pseudomonadota</taxon>
        <taxon>Gammaproteobacteria</taxon>
        <taxon>Enterobacterales</taxon>
        <taxon>Enterobacteriaceae</taxon>
        <taxon>Escherichia</taxon>
    </lineage>
</organism>
<protein>
    <recommendedName>
        <fullName>Putative L-ribulose-5-phosphate 3-epimerase SgbU</fullName>
        <ecNumber>5.1.3.22</ecNumber>
    </recommendedName>
    <alternativeName>
        <fullName>L-xylulose-5-phosphate 3-epimerase</fullName>
    </alternativeName>
</protein>